<protein>
    <recommendedName>
        <fullName>Uncharacterized protein ORF258</fullName>
    </recommendedName>
</protein>
<feature type="chain" id="PRO_0000384524" description="Uncharacterized protein ORF258">
    <location>
        <begin position="1"/>
        <end position="258"/>
    </location>
</feature>
<reference key="1">
    <citation type="journal article" date="2005" name="J. Bacteriol.">
        <title>Structure and genome organization of AFV2, a novel archaeal lipothrixvirus with unusual terminal and core structures.</title>
        <authorList>
            <person name="Haring M."/>
            <person name="Vestergaard G."/>
            <person name="Brugger K."/>
            <person name="Rachel R."/>
            <person name="Garrett R.A."/>
            <person name="Prangishvili D."/>
        </authorList>
    </citation>
    <scope>NUCLEOTIDE SEQUENCE [GENOMIC DNA]</scope>
</reference>
<gene>
    <name type="ORF">ORF258</name>
</gene>
<organism>
    <name type="scientific">Acidianus filamentous virus 2 (isolate Italy/Pozzuoli)</name>
    <name type="common">AFV-2</name>
    <dbReference type="NCBI Taxonomy" id="654910"/>
    <lineage>
        <taxon>Viruses</taxon>
        <taxon>Adnaviria</taxon>
        <taxon>Zilligvirae</taxon>
        <taxon>Taleaviricota</taxon>
        <taxon>Tokiviricetes</taxon>
        <taxon>Ligamenvirales</taxon>
        <taxon>Lipothrixviridae</taxon>
        <taxon>Deltalipothrixvirus</taxon>
        <taxon>Acidianus filamentous virus 2</taxon>
    </lineage>
</organism>
<dbReference type="EMBL" id="AJ854042">
    <property type="protein sequence ID" value="CAH69424.1"/>
    <property type="molecule type" value="Genomic_DNA"/>
</dbReference>
<dbReference type="RefSeq" id="YP_001496962.1">
    <property type="nucleotide sequence ID" value="NC_009884.1"/>
</dbReference>
<dbReference type="KEGG" id="vg:5656062"/>
<dbReference type="Proteomes" id="UP000006364">
    <property type="component" value="Genome"/>
</dbReference>
<keyword id="KW-1185">Reference proteome</keyword>
<name>Y258_AFV2P</name>
<sequence length="258" mass="28235">MRTEVKGKVVIVTEKGEMKEYDNQIQSSFISSLINYARIGGTISNYSYNIQLLNQNTLLGSYTGGLQYKQVSSSLQAIFTFVIPTVPPSVNTLQLYVSSSLGTFLVATLNNVSLPISSAIQIIWAISFSISSSDYFTPYLVFAFFAPPSSTIPFVNTPLPNVQSAITSIQNVGYLTSPPTYYATYNGQYVQVAPTFTNNTISIEYTIPNINTTSTFTNVTIVTTATSGYVNLLAQEQQITVQVGQVLSIEYNTTWSTS</sequence>
<accession>Q573D2</accession>
<organismHost>
    <name type="scientific">Acidianus sp. F28</name>
    <dbReference type="NCBI Taxonomy" id="315458"/>
</organismHost>
<proteinExistence type="predicted"/>